<gene>
    <name evidence="1" type="primary">rplM</name>
    <name evidence="1" type="synonym">rpl13</name>
    <name type="ordered locus">Pro_1686</name>
</gene>
<comment type="function">
    <text evidence="1">This protein is one of the early assembly proteins of the 50S ribosomal subunit, although it is not seen to bind rRNA by itself. It is important during the early stages of 50S assembly.</text>
</comment>
<comment type="subunit">
    <text evidence="1">Part of the 50S ribosomal subunit.</text>
</comment>
<comment type="similarity">
    <text evidence="1">Belongs to the universal ribosomal protein uL13 family.</text>
</comment>
<protein>
    <recommendedName>
        <fullName evidence="1">Large ribosomal subunit protein uL13</fullName>
    </recommendedName>
    <alternativeName>
        <fullName evidence="3">50S ribosomal protein L13</fullName>
    </alternativeName>
</protein>
<accession>Q7V9Y8</accession>
<evidence type="ECO:0000255" key="1">
    <source>
        <dbReference type="HAMAP-Rule" id="MF_01366"/>
    </source>
</evidence>
<evidence type="ECO:0000256" key="2">
    <source>
        <dbReference type="SAM" id="MobiDB-lite"/>
    </source>
</evidence>
<evidence type="ECO:0000305" key="3"/>
<reference key="1">
    <citation type="journal article" date="2003" name="Proc. Natl. Acad. Sci. U.S.A.">
        <title>Genome sequence of the cyanobacterium Prochlorococcus marinus SS120, a nearly minimal oxyphototrophic genome.</title>
        <authorList>
            <person name="Dufresne A."/>
            <person name="Salanoubat M."/>
            <person name="Partensky F."/>
            <person name="Artiguenave F."/>
            <person name="Axmann I.M."/>
            <person name="Barbe V."/>
            <person name="Duprat S."/>
            <person name="Galperin M.Y."/>
            <person name="Koonin E.V."/>
            <person name="Le Gall F."/>
            <person name="Makarova K.S."/>
            <person name="Ostrowski M."/>
            <person name="Oztas S."/>
            <person name="Robert C."/>
            <person name="Rogozin I.B."/>
            <person name="Scanlan D.J."/>
            <person name="Tandeau de Marsac N."/>
            <person name="Weissenbach J."/>
            <person name="Wincker P."/>
            <person name="Wolf Y.I."/>
            <person name="Hess W.R."/>
        </authorList>
    </citation>
    <scope>NUCLEOTIDE SEQUENCE [LARGE SCALE GENOMIC DNA]</scope>
    <source>
        <strain>SARG / CCMP1375 / SS120</strain>
    </source>
</reference>
<keyword id="KW-1185">Reference proteome</keyword>
<keyword id="KW-0687">Ribonucleoprotein</keyword>
<keyword id="KW-0689">Ribosomal protein</keyword>
<sequence>MNKTITPSIDSINRQWYLVDAENQTLGRLATEVASVLRGKNKPSFTPHLDTGDFVIIVNAEKIKVTGKKGMQKLYRRHSGRPGGMKVETFNSLQERIPERIVEKAIKGMLPHNALGRQLFRKLKVYKGSEHPHSAQNPQVLSITTNELVK</sequence>
<proteinExistence type="inferred from homology"/>
<name>RL13_PROMA</name>
<organism>
    <name type="scientific">Prochlorococcus marinus (strain SARG / CCMP1375 / SS120)</name>
    <dbReference type="NCBI Taxonomy" id="167539"/>
    <lineage>
        <taxon>Bacteria</taxon>
        <taxon>Bacillati</taxon>
        <taxon>Cyanobacteriota</taxon>
        <taxon>Cyanophyceae</taxon>
        <taxon>Synechococcales</taxon>
        <taxon>Prochlorococcaceae</taxon>
        <taxon>Prochlorococcus</taxon>
    </lineage>
</organism>
<dbReference type="EMBL" id="AE017126">
    <property type="protein sequence ID" value="AAQ00730.1"/>
    <property type="molecule type" value="Genomic_DNA"/>
</dbReference>
<dbReference type="RefSeq" id="NP_876077.1">
    <property type="nucleotide sequence ID" value="NC_005042.1"/>
</dbReference>
<dbReference type="RefSeq" id="WP_011125835.1">
    <property type="nucleotide sequence ID" value="NC_005042.1"/>
</dbReference>
<dbReference type="SMR" id="Q7V9Y8"/>
<dbReference type="STRING" id="167539.Pro_1686"/>
<dbReference type="EnsemblBacteria" id="AAQ00730">
    <property type="protein sequence ID" value="AAQ00730"/>
    <property type="gene ID" value="Pro_1686"/>
</dbReference>
<dbReference type="KEGG" id="pma:Pro_1686"/>
<dbReference type="PATRIC" id="fig|167539.5.peg.1780"/>
<dbReference type="eggNOG" id="COG0102">
    <property type="taxonomic scope" value="Bacteria"/>
</dbReference>
<dbReference type="HOGENOM" id="CLU_082184_2_2_3"/>
<dbReference type="OrthoDB" id="9801330at2"/>
<dbReference type="Proteomes" id="UP000001420">
    <property type="component" value="Chromosome"/>
</dbReference>
<dbReference type="GO" id="GO:0022625">
    <property type="term" value="C:cytosolic large ribosomal subunit"/>
    <property type="evidence" value="ECO:0007669"/>
    <property type="project" value="TreeGrafter"/>
</dbReference>
<dbReference type="GO" id="GO:0003729">
    <property type="term" value="F:mRNA binding"/>
    <property type="evidence" value="ECO:0007669"/>
    <property type="project" value="TreeGrafter"/>
</dbReference>
<dbReference type="GO" id="GO:0003735">
    <property type="term" value="F:structural constituent of ribosome"/>
    <property type="evidence" value="ECO:0007669"/>
    <property type="project" value="InterPro"/>
</dbReference>
<dbReference type="GO" id="GO:0017148">
    <property type="term" value="P:negative regulation of translation"/>
    <property type="evidence" value="ECO:0007669"/>
    <property type="project" value="TreeGrafter"/>
</dbReference>
<dbReference type="GO" id="GO:0006412">
    <property type="term" value="P:translation"/>
    <property type="evidence" value="ECO:0007669"/>
    <property type="project" value="UniProtKB-UniRule"/>
</dbReference>
<dbReference type="CDD" id="cd00392">
    <property type="entry name" value="Ribosomal_L13"/>
    <property type="match status" value="1"/>
</dbReference>
<dbReference type="FunFam" id="3.90.1180.10:FF:000001">
    <property type="entry name" value="50S ribosomal protein L13"/>
    <property type="match status" value="1"/>
</dbReference>
<dbReference type="Gene3D" id="3.90.1180.10">
    <property type="entry name" value="Ribosomal protein L13"/>
    <property type="match status" value="1"/>
</dbReference>
<dbReference type="HAMAP" id="MF_01366">
    <property type="entry name" value="Ribosomal_uL13"/>
    <property type="match status" value="1"/>
</dbReference>
<dbReference type="InterPro" id="IPR005822">
    <property type="entry name" value="Ribosomal_uL13"/>
</dbReference>
<dbReference type="InterPro" id="IPR005823">
    <property type="entry name" value="Ribosomal_uL13_bac-type"/>
</dbReference>
<dbReference type="InterPro" id="IPR023563">
    <property type="entry name" value="Ribosomal_uL13_CS"/>
</dbReference>
<dbReference type="InterPro" id="IPR036899">
    <property type="entry name" value="Ribosomal_uL13_sf"/>
</dbReference>
<dbReference type="NCBIfam" id="TIGR01066">
    <property type="entry name" value="rplM_bact"/>
    <property type="match status" value="1"/>
</dbReference>
<dbReference type="PANTHER" id="PTHR11545:SF2">
    <property type="entry name" value="LARGE RIBOSOMAL SUBUNIT PROTEIN UL13M"/>
    <property type="match status" value="1"/>
</dbReference>
<dbReference type="PANTHER" id="PTHR11545">
    <property type="entry name" value="RIBOSOMAL PROTEIN L13"/>
    <property type="match status" value="1"/>
</dbReference>
<dbReference type="Pfam" id="PF00572">
    <property type="entry name" value="Ribosomal_L13"/>
    <property type="match status" value="1"/>
</dbReference>
<dbReference type="PIRSF" id="PIRSF002181">
    <property type="entry name" value="Ribosomal_L13"/>
    <property type="match status" value="1"/>
</dbReference>
<dbReference type="SUPFAM" id="SSF52161">
    <property type="entry name" value="Ribosomal protein L13"/>
    <property type="match status" value="1"/>
</dbReference>
<dbReference type="PROSITE" id="PS00783">
    <property type="entry name" value="RIBOSOMAL_L13"/>
    <property type="match status" value="1"/>
</dbReference>
<feature type="chain" id="PRO_1000055439" description="Large ribosomal subunit protein uL13">
    <location>
        <begin position="1"/>
        <end position="150"/>
    </location>
</feature>
<feature type="region of interest" description="Disordered" evidence="2">
    <location>
        <begin position="130"/>
        <end position="150"/>
    </location>
</feature>
<feature type="compositionally biased region" description="Polar residues" evidence="2">
    <location>
        <begin position="134"/>
        <end position="150"/>
    </location>
</feature>